<gene>
    <name type="ordered locus">HI_0206</name>
</gene>
<protein>
    <recommendedName>
        <fullName>NAD 5'-nucleotidase</fullName>
        <shortName>NadN</shortName>
        <ecNumber>3.1.3.5</ecNumber>
    </recommendedName>
</protein>
<dbReference type="EC" id="3.1.3.5"/>
<dbReference type="EMBL" id="L42023">
    <property type="protein sequence ID" value="AAC21874.1"/>
    <property type="molecule type" value="Genomic_DNA"/>
</dbReference>
<dbReference type="PIR" id="E64054">
    <property type="entry name" value="E64054"/>
</dbReference>
<dbReference type="RefSeq" id="NP_438375.1">
    <property type="nucleotide sequence ID" value="NC_000907.1"/>
</dbReference>
<dbReference type="PDB" id="3ZTV">
    <property type="method" value="X-ray"/>
    <property type="resolution" value="1.30 A"/>
    <property type="chains" value="A=25-603"/>
</dbReference>
<dbReference type="PDB" id="3ZU0">
    <property type="method" value="X-ray"/>
    <property type="resolution" value="2.00 A"/>
    <property type="chains" value="A/B=25-603"/>
</dbReference>
<dbReference type="PDBsum" id="3ZTV"/>
<dbReference type="PDBsum" id="3ZU0"/>
<dbReference type="SMR" id="P44569"/>
<dbReference type="STRING" id="71421.HI_0206"/>
<dbReference type="EnsemblBacteria" id="AAC21874">
    <property type="protein sequence ID" value="AAC21874"/>
    <property type="gene ID" value="HI_0206"/>
</dbReference>
<dbReference type="KEGG" id="hin:HI_0206"/>
<dbReference type="PATRIC" id="fig|71421.8.peg.211"/>
<dbReference type="eggNOG" id="COG0737">
    <property type="taxonomic scope" value="Bacteria"/>
</dbReference>
<dbReference type="HOGENOM" id="CLU_005854_7_1_6"/>
<dbReference type="OrthoDB" id="9803927at2"/>
<dbReference type="PhylomeDB" id="P44569"/>
<dbReference type="BioCyc" id="HINF71421:G1GJ1-217-MONOMER"/>
<dbReference type="BioCyc" id="MetaCyc:MONOMER-8341"/>
<dbReference type="EvolutionaryTrace" id="P44569"/>
<dbReference type="Proteomes" id="UP000000579">
    <property type="component" value="Chromosome"/>
</dbReference>
<dbReference type="GO" id="GO:0030288">
    <property type="term" value="C:outer membrane-bounded periplasmic space"/>
    <property type="evidence" value="ECO:0000318"/>
    <property type="project" value="GO_Central"/>
</dbReference>
<dbReference type="GO" id="GO:0008253">
    <property type="term" value="F:5'-nucleotidase activity"/>
    <property type="evidence" value="ECO:0000318"/>
    <property type="project" value="GO_Central"/>
</dbReference>
<dbReference type="GO" id="GO:0046872">
    <property type="term" value="F:metal ion binding"/>
    <property type="evidence" value="ECO:0007669"/>
    <property type="project" value="UniProtKB-KW"/>
</dbReference>
<dbReference type="GO" id="GO:0000166">
    <property type="term" value="F:nucleotide binding"/>
    <property type="evidence" value="ECO:0007669"/>
    <property type="project" value="UniProtKB-KW"/>
</dbReference>
<dbReference type="GO" id="GO:0008768">
    <property type="term" value="F:UDP-sugar diphosphatase activity"/>
    <property type="evidence" value="ECO:0000318"/>
    <property type="project" value="GO_Central"/>
</dbReference>
<dbReference type="GO" id="GO:0009166">
    <property type="term" value="P:nucleotide catabolic process"/>
    <property type="evidence" value="ECO:0007669"/>
    <property type="project" value="InterPro"/>
</dbReference>
<dbReference type="CDD" id="cd07409">
    <property type="entry name" value="MPP_CD73_N"/>
    <property type="match status" value="1"/>
</dbReference>
<dbReference type="Gene3D" id="3.60.21.10">
    <property type="match status" value="1"/>
</dbReference>
<dbReference type="Gene3D" id="3.90.780.10">
    <property type="entry name" value="5'-Nucleotidase, C-terminal domain"/>
    <property type="match status" value="1"/>
</dbReference>
<dbReference type="InterPro" id="IPR008334">
    <property type="entry name" value="5'-Nucleotdase_C"/>
</dbReference>
<dbReference type="InterPro" id="IPR036907">
    <property type="entry name" value="5'-Nucleotdase_C_sf"/>
</dbReference>
<dbReference type="InterPro" id="IPR006146">
    <property type="entry name" value="5'-Nucleotdase_CS"/>
</dbReference>
<dbReference type="InterPro" id="IPR006179">
    <property type="entry name" value="5_nucleotidase/apyrase"/>
</dbReference>
<dbReference type="InterPro" id="IPR004843">
    <property type="entry name" value="Calcineurin-like_PHP_ApaH"/>
</dbReference>
<dbReference type="InterPro" id="IPR029052">
    <property type="entry name" value="Metallo-depent_PP-like"/>
</dbReference>
<dbReference type="InterPro" id="IPR006420">
    <property type="entry name" value="NadN"/>
</dbReference>
<dbReference type="NCBIfam" id="TIGR01530">
    <property type="entry name" value="nadN"/>
    <property type="match status" value="1"/>
</dbReference>
<dbReference type="PANTHER" id="PTHR11575">
    <property type="entry name" value="5'-NUCLEOTIDASE-RELATED"/>
    <property type="match status" value="1"/>
</dbReference>
<dbReference type="PANTHER" id="PTHR11575:SF46">
    <property type="entry name" value="PROTEIN USHA"/>
    <property type="match status" value="1"/>
</dbReference>
<dbReference type="Pfam" id="PF02872">
    <property type="entry name" value="5_nucleotid_C"/>
    <property type="match status" value="1"/>
</dbReference>
<dbReference type="Pfam" id="PF00149">
    <property type="entry name" value="Metallophos"/>
    <property type="match status" value="1"/>
</dbReference>
<dbReference type="PRINTS" id="PR01607">
    <property type="entry name" value="APYRASEFAMLY"/>
</dbReference>
<dbReference type="SUPFAM" id="SSF55816">
    <property type="entry name" value="5'-nucleotidase (syn. UDP-sugar hydrolase), C-terminal domain"/>
    <property type="match status" value="1"/>
</dbReference>
<dbReference type="SUPFAM" id="SSF56300">
    <property type="entry name" value="Metallo-dependent phosphatases"/>
    <property type="match status" value="1"/>
</dbReference>
<dbReference type="PROSITE" id="PS00785">
    <property type="entry name" value="5_NUCLEOTIDASE_1"/>
    <property type="match status" value="1"/>
</dbReference>
<dbReference type="PROSITE" id="PS00786">
    <property type="entry name" value="5_NUCLEOTIDASE_2"/>
    <property type="match status" value="1"/>
</dbReference>
<proteinExistence type="evidence at protein level"/>
<reference key="1">
    <citation type="journal article" date="1995" name="Science">
        <title>Whole-genome random sequencing and assembly of Haemophilus influenzae Rd.</title>
        <authorList>
            <person name="Fleischmann R.D."/>
            <person name="Adams M.D."/>
            <person name="White O."/>
            <person name="Clayton R.A."/>
            <person name="Kirkness E.F."/>
            <person name="Kerlavage A.R."/>
            <person name="Bult C.J."/>
            <person name="Tomb J.-F."/>
            <person name="Dougherty B.A."/>
            <person name="Merrick J.M."/>
            <person name="McKenney K."/>
            <person name="Sutton G.G."/>
            <person name="FitzHugh W."/>
            <person name="Fields C.A."/>
            <person name="Gocayne J.D."/>
            <person name="Scott J.D."/>
            <person name="Shirley R."/>
            <person name="Liu L.-I."/>
            <person name="Glodek A."/>
            <person name="Kelley J.M."/>
            <person name="Weidman J.F."/>
            <person name="Phillips C.A."/>
            <person name="Spriggs T."/>
            <person name="Hedblom E."/>
            <person name="Cotton M.D."/>
            <person name="Utterback T.R."/>
            <person name="Hanna M.C."/>
            <person name="Nguyen D.T."/>
            <person name="Saudek D.M."/>
            <person name="Brandon R.C."/>
            <person name="Fine L.D."/>
            <person name="Fritchman J.L."/>
            <person name="Fuhrmann J.L."/>
            <person name="Geoghagen N.S.M."/>
            <person name="Gnehm C.L."/>
            <person name="McDonald L.A."/>
            <person name="Small K.V."/>
            <person name="Fraser C.M."/>
            <person name="Smith H.O."/>
            <person name="Venter J.C."/>
        </authorList>
    </citation>
    <scope>NUCLEOTIDE SEQUENCE [LARGE SCALE GENOMIC DNA]</scope>
    <source>
        <strain>ATCC 51907 / DSM 11121 / KW20 / Rd</strain>
    </source>
</reference>
<reference key="2">
    <citation type="journal article" date="2000" name="Electrophoresis">
        <title>Two-dimensional map of the proteome of Haemophilus influenzae.</title>
        <authorList>
            <person name="Langen H."/>
            <person name="Takacs B."/>
            <person name="Evers S."/>
            <person name="Berndt P."/>
            <person name="Lahm H.W."/>
            <person name="Wipf B."/>
            <person name="Gray C."/>
            <person name="Fountoulakis M."/>
        </authorList>
    </citation>
    <scope>PROTEIN SEQUENCE OF 26-38</scope>
    <source>
        <strain>ATCC 51907 / DSM 11121 / KW20 / Rd</strain>
    </source>
</reference>
<reference key="3">
    <citation type="journal article" date="2012" name="Biochem. J.">
        <title>The high-resolution crystal structure of periplasmic Haemophilus influenzae NAD nucleotidase reveals a novel enzymatic function of human CD73 related to NAD metabolism.</title>
        <authorList>
            <person name="Garavaglia S."/>
            <person name="Bruzzone S."/>
            <person name="Cassani C."/>
            <person name="Canella L."/>
            <person name="Allegrone G."/>
            <person name="Sturla L."/>
            <person name="Mannino E."/>
            <person name="Millo E."/>
            <person name="De Flora A."/>
            <person name="Rizzi M."/>
        </authorList>
    </citation>
    <scope>X-RAY CRYSTALLOGRAPHY (1.3 ANGSTROMS) OF 25-603</scope>
    <scope>FUNCTION</scope>
    <scope>SUBSTRATE SPECIFICITY</scope>
    <scope>COFACTOR</scope>
    <scope>SUBSTRATE-BINDING SITES</scope>
    <scope>ZINC-BINDING SITES</scope>
    <scope>SUBCELLULAR LOCATION</scope>
</reference>
<keyword id="KW-0002">3D-structure</keyword>
<keyword id="KW-0903">Direct protein sequencing</keyword>
<keyword id="KW-0378">Hydrolase</keyword>
<keyword id="KW-0479">Metal-binding</keyword>
<keyword id="KW-0547">Nucleotide-binding</keyword>
<keyword id="KW-0574">Periplasm</keyword>
<keyword id="KW-1185">Reference proteome</keyword>
<keyword id="KW-0732">Signal</keyword>
<keyword id="KW-0862">Zinc</keyword>
<name>5NTD_HAEIN</name>
<feature type="signal peptide" evidence="2">
    <location>
        <begin position="1"/>
        <end position="25"/>
    </location>
</feature>
<feature type="chain" id="PRO_0000000026" description="NAD 5'-nucleotidase">
    <location>
        <begin position="26"/>
        <end position="603"/>
    </location>
</feature>
<feature type="binding site">
    <location>
        <position position="44"/>
    </location>
    <ligand>
        <name>Zn(2+)</name>
        <dbReference type="ChEBI" id="CHEBI:29105"/>
        <label>1</label>
    </ligand>
</feature>
<feature type="binding site">
    <location>
        <position position="46"/>
    </location>
    <ligand>
        <name>Zn(2+)</name>
        <dbReference type="ChEBI" id="CHEBI:29105"/>
        <label>1</label>
    </ligand>
</feature>
<feature type="binding site">
    <location>
        <position position="94"/>
    </location>
    <ligand>
        <name>Zn(2+)</name>
        <dbReference type="ChEBI" id="CHEBI:29105"/>
        <label>1</label>
    </ligand>
</feature>
<feature type="binding site">
    <location>
        <position position="94"/>
    </location>
    <ligand>
        <name>Zn(2+)</name>
        <dbReference type="ChEBI" id="CHEBI:29105"/>
        <label>2</label>
    </ligand>
</feature>
<feature type="binding site">
    <location>
        <position position="126"/>
    </location>
    <ligand>
        <name>Zn(2+)</name>
        <dbReference type="ChEBI" id="CHEBI:29105"/>
        <label>2</label>
    </ligand>
</feature>
<feature type="binding site">
    <location>
        <position position="227"/>
    </location>
    <ligand>
        <name>Zn(2+)</name>
        <dbReference type="ChEBI" id="CHEBI:29105"/>
        <label>2</label>
    </ligand>
</feature>
<feature type="binding site">
    <location>
        <position position="397"/>
    </location>
    <ligand>
        <name>substrate</name>
    </ligand>
</feature>
<feature type="binding site">
    <location>
        <position position="437"/>
    </location>
    <ligand>
        <name>substrate</name>
    </ligand>
</feature>
<feature type="binding site">
    <location>
        <position position="456"/>
    </location>
    <ligand>
        <name>substrate</name>
    </ligand>
</feature>
<feature type="binding site" evidence="1">
    <location>
        <begin position="540"/>
        <end position="546"/>
    </location>
    <ligand>
        <name>substrate</name>
    </ligand>
</feature>
<feature type="site" description="Transition state stabilizer">
    <location>
        <position position="127"/>
    </location>
</feature>
<feature type="site" description="Transition state stabilizer">
    <location>
        <position position="130"/>
    </location>
</feature>
<feature type="strand" evidence="5">
    <location>
        <begin position="35"/>
        <end position="42"/>
    </location>
</feature>
<feature type="strand" evidence="5">
    <location>
        <begin position="52"/>
        <end position="58"/>
    </location>
</feature>
<feature type="strand" evidence="5">
    <location>
        <begin position="61"/>
        <end position="67"/>
    </location>
</feature>
<feature type="helix" evidence="5">
    <location>
        <begin position="70"/>
        <end position="83"/>
    </location>
</feature>
<feature type="strand" evidence="5">
    <location>
        <begin position="84"/>
        <end position="91"/>
    </location>
</feature>
<feature type="helix" evidence="5">
    <location>
        <begin position="100"/>
        <end position="103"/>
    </location>
</feature>
<feature type="turn" evidence="5">
    <location>
        <begin position="104"/>
        <end position="107"/>
    </location>
</feature>
<feature type="helix" evidence="5">
    <location>
        <begin position="108"/>
        <end position="116"/>
    </location>
</feature>
<feature type="strand" evidence="5">
    <location>
        <begin position="120"/>
        <end position="123"/>
    </location>
</feature>
<feature type="helix" evidence="5">
    <location>
        <begin position="127"/>
        <end position="129"/>
    </location>
</feature>
<feature type="helix" evidence="5">
    <location>
        <begin position="132"/>
        <end position="140"/>
    </location>
</feature>
<feature type="strand" evidence="5">
    <location>
        <begin position="150"/>
        <end position="154"/>
    </location>
</feature>
<feature type="turn" evidence="5">
    <location>
        <begin position="159"/>
        <end position="162"/>
    </location>
</feature>
<feature type="strand" evidence="5">
    <location>
        <begin position="165"/>
        <end position="172"/>
    </location>
</feature>
<feature type="strand" evidence="5">
    <location>
        <begin position="175"/>
        <end position="183"/>
    </location>
</feature>
<feature type="helix" evidence="5">
    <location>
        <begin position="186"/>
        <end position="191"/>
    </location>
</feature>
<feature type="strand" evidence="5">
    <location>
        <begin position="198"/>
        <end position="200"/>
    </location>
</feature>
<feature type="helix" evidence="5">
    <location>
        <begin position="203"/>
        <end position="214"/>
    </location>
</feature>
<feature type="helix" evidence="5">
    <location>
        <begin position="215"/>
        <end position="217"/>
    </location>
</feature>
<feature type="strand" evidence="5">
    <location>
        <begin position="222"/>
        <end position="227"/>
    </location>
</feature>
<feature type="helix" evidence="5">
    <location>
        <begin position="230"/>
        <end position="239"/>
    </location>
</feature>
<feature type="strand" evidence="5">
    <location>
        <begin position="245"/>
        <end position="248"/>
    </location>
</feature>
<feature type="strand" evidence="5">
    <location>
        <begin position="254"/>
        <end position="256"/>
    </location>
</feature>
<feature type="helix" evidence="5">
    <location>
        <begin position="258"/>
        <end position="262"/>
    </location>
</feature>
<feature type="strand" evidence="5">
    <location>
        <begin position="267"/>
        <end position="276"/>
    </location>
</feature>
<feature type="strand" evidence="5">
    <location>
        <begin position="282"/>
        <end position="288"/>
    </location>
</feature>
<feature type="strand" evidence="5">
    <location>
        <begin position="294"/>
        <end position="302"/>
    </location>
</feature>
<feature type="strand" evidence="5">
    <location>
        <begin position="308"/>
        <end position="319"/>
    </location>
</feature>
<feature type="strand" evidence="5">
    <location>
        <begin position="325"/>
        <end position="327"/>
    </location>
</feature>
<feature type="strand" evidence="5">
    <location>
        <begin position="333"/>
        <end position="335"/>
    </location>
</feature>
<feature type="helix" evidence="5">
    <location>
        <begin position="338"/>
        <end position="349"/>
    </location>
</feature>
<feature type="strand" evidence="5">
    <location>
        <begin position="354"/>
        <end position="357"/>
    </location>
</feature>
<feature type="helix" evidence="5">
    <location>
        <begin position="361"/>
        <end position="377"/>
    </location>
</feature>
<feature type="strand" evidence="5">
    <location>
        <begin position="380"/>
        <end position="388"/>
    </location>
</feature>
<feature type="helix" evidence="5">
    <location>
        <begin position="394"/>
        <end position="396"/>
    </location>
</feature>
<feature type="helix" evidence="5">
    <location>
        <begin position="410"/>
        <end position="420"/>
    </location>
</feature>
<feature type="turn" evidence="6">
    <location>
        <begin position="423"/>
        <end position="425"/>
    </location>
</feature>
<feature type="strand" evidence="5">
    <location>
        <begin position="428"/>
        <end position="432"/>
    </location>
</feature>
<feature type="helix" evidence="5">
    <location>
        <begin position="433"/>
        <end position="435"/>
    </location>
</feature>
<feature type="strand" evidence="5">
    <location>
        <begin position="442"/>
        <end position="446"/>
    </location>
</feature>
<feature type="helix" evidence="5">
    <location>
        <begin position="447"/>
        <end position="453"/>
    </location>
</feature>
<feature type="strand" evidence="5">
    <location>
        <begin position="459"/>
        <end position="466"/>
    </location>
</feature>
<feature type="helix" evidence="5">
    <location>
        <begin position="467"/>
        <end position="482"/>
    </location>
</feature>
<feature type="helix" evidence="5">
    <location>
        <begin position="487"/>
        <end position="489"/>
    </location>
</feature>
<feature type="strand" evidence="5">
    <location>
        <begin position="491"/>
        <end position="503"/>
    </location>
</feature>
<feature type="strand" evidence="6">
    <location>
        <begin position="506"/>
        <end position="508"/>
    </location>
</feature>
<feature type="strand" evidence="5">
    <location>
        <begin position="511"/>
        <end position="517"/>
    </location>
</feature>
<feature type="strand" evidence="5">
    <location>
        <begin position="524"/>
        <end position="526"/>
    </location>
</feature>
<feature type="strand" evidence="5">
    <location>
        <begin position="531"/>
        <end position="538"/>
    </location>
</feature>
<feature type="helix" evidence="5">
    <location>
        <begin position="539"/>
        <end position="542"/>
    </location>
</feature>
<feature type="helix" evidence="5">
    <location>
        <begin position="545"/>
        <end position="547"/>
    </location>
</feature>
<feature type="helix" evidence="5">
    <location>
        <begin position="549"/>
        <end position="554"/>
    </location>
</feature>
<feature type="helix" evidence="5">
    <location>
        <begin position="558"/>
        <end position="560"/>
    </location>
</feature>
<feature type="strand" evidence="5">
    <location>
        <begin position="563"/>
        <end position="568"/>
    </location>
</feature>
<feature type="helix" evidence="5">
    <location>
        <begin position="569"/>
        <end position="579"/>
    </location>
</feature>
<feature type="strand" evidence="5">
    <location>
        <begin position="582"/>
        <end position="584"/>
    </location>
</feature>
<feature type="strand" evidence="5">
    <location>
        <begin position="590"/>
        <end position="594"/>
    </location>
</feature>
<comment type="function">
    <text evidence="3">Degrades NAD into adenosine and nicotinamide riboside, the latter being subsequently internalized by a specific permease. Also endowed with NAD(P) pyrophosphatase activity. Exhibits a broad substrate specificity, recognizing either mono- or dinucleotide nicotinamides and different adenosine phosphates with a maximal activity on 5'-adenosine monophosphate.</text>
</comment>
<comment type="catalytic activity">
    <reaction>
        <text>a ribonucleoside 5'-phosphate + H2O = a ribonucleoside + phosphate</text>
        <dbReference type="Rhea" id="RHEA:12484"/>
        <dbReference type="ChEBI" id="CHEBI:15377"/>
        <dbReference type="ChEBI" id="CHEBI:18254"/>
        <dbReference type="ChEBI" id="CHEBI:43474"/>
        <dbReference type="ChEBI" id="CHEBI:58043"/>
        <dbReference type="EC" id="3.1.3.5"/>
    </reaction>
</comment>
<comment type="cofactor">
    <cofactor evidence="3">
        <name>Zn(2+)</name>
        <dbReference type="ChEBI" id="CHEBI:29105"/>
    </cofactor>
    <text evidence="3">Binds 2 Zn(2+) ions per subunit.</text>
</comment>
<comment type="subcellular location">
    <subcellularLocation>
        <location evidence="3">Periplasm</location>
    </subcellularLocation>
</comment>
<comment type="similarity">
    <text evidence="4">Belongs to the 5'-nucleotidase family.</text>
</comment>
<accession>P44569</accession>
<sequence>MLLSKKSASFALSAFAMLFTSVALAKEAPQAHKAVELSILHINDHHSYLEPHETRINLNGQQTKVDIGGFSAVNAKLNKLRKKYKNPLVLHAGDAITGTLYFTLFGGSADAAVMNAGNFHYFTLGNHEFDAGNEGLLKLLEPLKIPVLSANVIPDKNSILYNKWKPYDIFTVDGEKIAIIGLDTVNKTVNSSSPGKDVKFYDEIATAQIMANALKQQGINKIILLSHAGSEKNIEIAQKVNDIDVIVTGDSHYLYGNDELRSLKLPVIYEYPLEFKNPNGDPVFVMEGWAYSAVVGDLGVKFSPEGIASITRKIPHVLMSSHKLQVKNAEGKWTELTGDERKKALDTLKSMKSISLDDHDAKTDMLISKYKSEKDRLAQEIVGVITGSAMPGGSANRIPNKAGSNPEGSIATRFIAETMYNELKTVDLTIQNAGGVRADILPGNVTFNDAYTFLPFGNTLYTYKMEGSLVKQVLEDAMQFALVDGSTGAFPYGAGIRYEANETPNAEGKRLVSVEVLNKQTQQWEPIDDNKRYLVGTNAYVAGGKDGYKTFGKLFNDPKYEGVDTYLPDAESFIKFMKKHPHFEAYTSSNVKFNASTDALPKK</sequence>
<evidence type="ECO:0000250" key="1"/>
<evidence type="ECO:0000269" key="2">
    <source>
    </source>
</evidence>
<evidence type="ECO:0000269" key="3">
    <source>
    </source>
</evidence>
<evidence type="ECO:0000305" key="4"/>
<evidence type="ECO:0007829" key="5">
    <source>
        <dbReference type="PDB" id="3ZTV"/>
    </source>
</evidence>
<evidence type="ECO:0007829" key="6">
    <source>
        <dbReference type="PDB" id="3ZU0"/>
    </source>
</evidence>
<organism>
    <name type="scientific">Haemophilus influenzae (strain ATCC 51907 / DSM 11121 / KW20 / Rd)</name>
    <dbReference type="NCBI Taxonomy" id="71421"/>
    <lineage>
        <taxon>Bacteria</taxon>
        <taxon>Pseudomonadati</taxon>
        <taxon>Pseudomonadota</taxon>
        <taxon>Gammaproteobacteria</taxon>
        <taxon>Pasteurellales</taxon>
        <taxon>Pasteurellaceae</taxon>
        <taxon>Haemophilus</taxon>
    </lineage>
</organism>